<protein>
    <recommendedName>
        <fullName evidence="1">Exodeoxyribonuclease 7 large subunit</fullName>
        <ecNumber evidence="1">3.1.11.6</ecNumber>
    </recommendedName>
    <alternativeName>
        <fullName evidence="1">Exodeoxyribonuclease VII large subunit</fullName>
        <shortName evidence="1">Exonuclease VII large subunit</shortName>
    </alternativeName>
</protein>
<proteinExistence type="inferred from homology"/>
<accession>C1L2R7</accession>
<comment type="function">
    <text evidence="1">Bidirectionally degrades single-stranded DNA into large acid-insoluble oligonucleotides, which are then degraded further into small acid-soluble oligonucleotides.</text>
</comment>
<comment type="catalytic activity">
    <reaction evidence="1">
        <text>Exonucleolytic cleavage in either 5'- to 3'- or 3'- to 5'-direction to yield nucleoside 5'-phosphates.</text>
        <dbReference type="EC" id="3.1.11.6"/>
    </reaction>
</comment>
<comment type="subunit">
    <text evidence="1">Heterooligomer composed of large and small subunits.</text>
</comment>
<comment type="subcellular location">
    <subcellularLocation>
        <location evidence="1">Cytoplasm</location>
    </subcellularLocation>
</comment>
<comment type="similarity">
    <text evidence="1">Belongs to the XseA family.</text>
</comment>
<feature type="chain" id="PRO_1000205678" description="Exodeoxyribonuclease 7 large subunit">
    <location>
        <begin position="1"/>
        <end position="450"/>
    </location>
</feature>
<keyword id="KW-0963">Cytoplasm</keyword>
<keyword id="KW-0269">Exonuclease</keyword>
<keyword id="KW-0378">Hydrolase</keyword>
<keyword id="KW-0540">Nuclease</keyword>
<evidence type="ECO:0000255" key="1">
    <source>
        <dbReference type="HAMAP-Rule" id="MF_00378"/>
    </source>
</evidence>
<organism>
    <name type="scientific">Listeria monocytogenes serotype 4b (strain CLIP80459)</name>
    <dbReference type="NCBI Taxonomy" id="568819"/>
    <lineage>
        <taxon>Bacteria</taxon>
        <taxon>Bacillati</taxon>
        <taxon>Bacillota</taxon>
        <taxon>Bacilli</taxon>
        <taxon>Bacillales</taxon>
        <taxon>Listeriaceae</taxon>
        <taxon>Listeria</taxon>
    </lineage>
</organism>
<dbReference type="EC" id="3.1.11.6" evidence="1"/>
<dbReference type="EMBL" id="FM242711">
    <property type="protein sequence ID" value="CAS05133.1"/>
    <property type="molecule type" value="Genomic_DNA"/>
</dbReference>
<dbReference type="RefSeq" id="WP_003727476.1">
    <property type="nucleotide sequence ID" value="NC_012488.1"/>
</dbReference>
<dbReference type="SMR" id="C1L2R7"/>
<dbReference type="KEGG" id="lmc:Lm4b_01369"/>
<dbReference type="HOGENOM" id="CLU_023625_3_1_9"/>
<dbReference type="GO" id="GO:0005737">
    <property type="term" value="C:cytoplasm"/>
    <property type="evidence" value="ECO:0007669"/>
    <property type="project" value="UniProtKB-SubCell"/>
</dbReference>
<dbReference type="GO" id="GO:0009318">
    <property type="term" value="C:exodeoxyribonuclease VII complex"/>
    <property type="evidence" value="ECO:0007669"/>
    <property type="project" value="InterPro"/>
</dbReference>
<dbReference type="GO" id="GO:0008855">
    <property type="term" value="F:exodeoxyribonuclease VII activity"/>
    <property type="evidence" value="ECO:0007669"/>
    <property type="project" value="UniProtKB-UniRule"/>
</dbReference>
<dbReference type="GO" id="GO:0003676">
    <property type="term" value="F:nucleic acid binding"/>
    <property type="evidence" value="ECO:0007669"/>
    <property type="project" value="InterPro"/>
</dbReference>
<dbReference type="GO" id="GO:0006308">
    <property type="term" value="P:DNA catabolic process"/>
    <property type="evidence" value="ECO:0007669"/>
    <property type="project" value="UniProtKB-UniRule"/>
</dbReference>
<dbReference type="CDD" id="cd04489">
    <property type="entry name" value="ExoVII_LU_OBF"/>
    <property type="match status" value="1"/>
</dbReference>
<dbReference type="HAMAP" id="MF_00378">
    <property type="entry name" value="Exonuc_7_L"/>
    <property type="match status" value="1"/>
</dbReference>
<dbReference type="InterPro" id="IPR003753">
    <property type="entry name" value="Exonuc_VII_L"/>
</dbReference>
<dbReference type="InterPro" id="IPR020579">
    <property type="entry name" value="Exonuc_VII_lsu_C"/>
</dbReference>
<dbReference type="InterPro" id="IPR025824">
    <property type="entry name" value="OB-fold_nuc-bd_dom"/>
</dbReference>
<dbReference type="NCBIfam" id="TIGR00237">
    <property type="entry name" value="xseA"/>
    <property type="match status" value="1"/>
</dbReference>
<dbReference type="PANTHER" id="PTHR30008">
    <property type="entry name" value="EXODEOXYRIBONUCLEASE 7 LARGE SUBUNIT"/>
    <property type="match status" value="1"/>
</dbReference>
<dbReference type="PANTHER" id="PTHR30008:SF0">
    <property type="entry name" value="EXODEOXYRIBONUCLEASE 7 LARGE SUBUNIT"/>
    <property type="match status" value="1"/>
</dbReference>
<dbReference type="Pfam" id="PF02601">
    <property type="entry name" value="Exonuc_VII_L"/>
    <property type="match status" value="1"/>
</dbReference>
<dbReference type="Pfam" id="PF13742">
    <property type="entry name" value="tRNA_anti_2"/>
    <property type="match status" value="1"/>
</dbReference>
<reference key="1">
    <citation type="journal article" date="2012" name="BMC Genomics">
        <title>Comparative genomics and transcriptomics of lineages I, II, and III strains of Listeria monocytogenes.</title>
        <authorList>
            <person name="Hain T."/>
            <person name="Ghai R."/>
            <person name="Billion A."/>
            <person name="Kuenne C.T."/>
            <person name="Steinweg C."/>
            <person name="Izar B."/>
            <person name="Mohamed W."/>
            <person name="Mraheil M."/>
            <person name="Domann E."/>
            <person name="Schaffrath S."/>
            <person name="Karst U."/>
            <person name="Goesmann A."/>
            <person name="Oehm S."/>
            <person name="Puhler A."/>
            <person name="Merkl R."/>
            <person name="Vorwerk S."/>
            <person name="Glaser P."/>
            <person name="Garrido P."/>
            <person name="Rusniok C."/>
            <person name="Buchrieser C."/>
            <person name="Goebel W."/>
            <person name="Chakraborty T."/>
        </authorList>
    </citation>
    <scope>NUCLEOTIDE SEQUENCE [LARGE SCALE GENOMIC DNA]</scope>
    <source>
        <strain>CLIP80459</strain>
    </source>
</reference>
<sequence>MEQDKYLTVAAITKYIEKKFEVDPYMKQVFVRGEISNLKQPASGHLYFTVKDEFAMLRSVMFHKAVQKIGFVPEDGMNVLITGRIGVFTKAGRYQFYAEHMEPDGVGALYIQLEQLKSQLEKEGLFAETHKKVLPSFPSKVAVVTSKTGAAVRDILTTIHRRMPSVEVIVYPTIVQGEKAAQKIVENIGKINQRNDIDVMIIGRGGGSLEELWAFNEEPVVRAVYDSDVPVISAVGHETDFALSDFSADVRAATPTAAAELAVPDYRDLEERLAERKYRLLAVTRQALERKERSLEQLKQHLILNGPKHQLEQQMERTDYFSERLNNAFSKQIFVKQTVFDRLNDRLHYYHPNKEIELQKEQMALRLQALEKAMKQLLKDKQQSFFRQIDALEHLSPLSLLKRGFGVTYKENMLVKSVQELEVGDNIQVKMQGGQIEALITAKEEDISGN</sequence>
<gene>
    <name evidence="1" type="primary">xseA</name>
    <name type="ordered locus">Lm4b_01369</name>
</gene>
<name>EX7L_LISMC</name>